<sequence length="365" mass="38169">MIKFLSALILLLVTTAAQAERIRDLTSVQGVRQNSLIGYGLVVGLDGTGDQTTQTPFTTQTLNNMLSQLGITVPTGTNMQLKNVAAVMVTASLPPFGRQGQTIDVVVSSMGNAKSLRGGTLLMTPLKGVDSQVYALAQGNILVGGAGASAGGSSVQVNQLNGGRITNGAVIERELPSQFGVGNTLNLQLNDEDFSMAQQIADTINRVRGYGSATALDARTIQVRVPSGNSSQVRFLADIQNMQVNVTPQDAKVVINSRTGSVVMNREVTLDSCAVAQGNLSVTVNRQANVSQPDTPFGGGQTVVTPQTQIDLRQSGGSLQSVRSSASLNNVVRALNALGATPMDLMSILQSMQSAGCLRAKLEII</sequence>
<name>FLGI_ECO45</name>
<proteinExistence type="inferred from homology"/>
<accession>B7MJ68</accession>
<gene>
    <name evidence="1" type="primary">flgI</name>
    <name type="ordered locus">ECS88_1094</name>
</gene>
<protein>
    <recommendedName>
        <fullName evidence="1">Flagellar P-ring protein</fullName>
    </recommendedName>
    <alternativeName>
        <fullName evidence="1">Basal body P-ring protein</fullName>
    </alternativeName>
</protein>
<evidence type="ECO:0000255" key="1">
    <source>
        <dbReference type="HAMAP-Rule" id="MF_00416"/>
    </source>
</evidence>
<feature type="signal peptide" evidence="1">
    <location>
        <begin position="1"/>
        <end position="19"/>
    </location>
</feature>
<feature type="chain" id="PRO_1000123968" description="Flagellar P-ring protein">
    <location>
        <begin position="20"/>
        <end position="365"/>
    </location>
</feature>
<dbReference type="EMBL" id="CU928161">
    <property type="protein sequence ID" value="CAR02421.1"/>
    <property type="molecule type" value="Genomic_DNA"/>
</dbReference>
<dbReference type="RefSeq" id="WP_000589326.1">
    <property type="nucleotide sequence ID" value="NC_011742.1"/>
</dbReference>
<dbReference type="SMR" id="B7MJ68"/>
<dbReference type="GeneID" id="75203667"/>
<dbReference type="KEGG" id="ecz:ECS88_1094"/>
<dbReference type="HOGENOM" id="CLU_045235_1_0_6"/>
<dbReference type="Proteomes" id="UP000000747">
    <property type="component" value="Chromosome"/>
</dbReference>
<dbReference type="GO" id="GO:0009428">
    <property type="term" value="C:bacterial-type flagellum basal body, distal rod, P ring"/>
    <property type="evidence" value="ECO:0007669"/>
    <property type="project" value="InterPro"/>
</dbReference>
<dbReference type="GO" id="GO:0030288">
    <property type="term" value="C:outer membrane-bounded periplasmic space"/>
    <property type="evidence" value="ECO:0007669"/>
    <property type="project" value="InterPro"/>
</dbReference>
<dbReference type="GO" id="GO:0005198">
    <property type="term" value="F:structural molecule activity"/>
    <property type="evidence" value="ECO:0007669"/>
    <property type="project" value="InterPro"/>
</dbReference>
<dbReference type="GO" id="GO:0071973">
    <property type="term" value="P:bacterial-type flagellum-dependent cell motility"/>
    <property type="evidence" value="ECO:0007669"/>
    <property type="project" value="InterPro"/>
</dbReference>
<dbReference type="HAMAP" id="MF_00416">
    <property type="entry name" value="FlgI"/>
    <property type="match status" value="1"/>
</dbReference>
<dbReference type="InterPro" id="IPR001782">
    <property type="entry name" value="Flag_FlgI"/>
</dbReference>
<dbReference type="NCBIfam" id="NF003676">
    <property type="entry name" value="PRK05303.1"/>
    <property type="match status" value="1"/>
</dbReference>
<dbReference type="PANTHER" id="PTHR30381">
    <property type="entry name" value="FLAGELLAR P-RING PERIPLASMIC PROTEIN FLGI"/>
    <property type="match status" value="1"/>
</dbReference>
<dbReference type="PANTHER" id="PTHR30381:SF0">
    <property type="entry name" value="FLAGELLAR P-RING PROTEIN"/>
    <property type="match status" value="1"/>
</dbReference>
<dbReference type="Pfam" id="PF02119">
    <property type="entry name" value="FlgI"/>
    <property type="match status" value="1"/>
</dbReference>
<dbReference type="PRINTS" id="PR01010">
    <property type="entry name" value="FLGPRINGFLGI"/>
</dbReference>
<keyword id="KW-0975">Bacterial flagellum</keyword>
<keyword id="KW-0574">Periplasm</keyword>
<keyword id="KW-1185">Reference proteome</keyword>
<keyword id="KW-0732">Signal</keyword>
<organism>
    <name type="scientific">Escherichia coli O45:K1 (strain S88 / ExPEC)</name>
    <dbReference type="NCBI Taxonomy" id="585035"/>
    <lineage>
        <taxon>Bacteria</taxon>
        <taxon>Pseudomonadati</taxon>
        <taxon>Pseudomonadota</taxon>
        <taxon>Gammaproteobacteria</taxon>
        <taxon>Enterobacterales</taxon>
        <taxon>Enterobacteriaceae</taxon>
        <taxon>Escherichia</taxon>
    </lineage>
</organism>
<reference key="1">
    <citation type="journal article" date="2009" name="PLoS Genet.">
        <title>Organised genome dynamics in the Escherichia coli species results in highly diverse adaptive paths.</title>
        <authorList>
            <person name="Touchon M."/>
            <person name="Hoede C."/>
            <person name="Tenaillon O."/>
            <person name="Barbe V."/>
            <person name="Baeriswyl S."/>
            <person name="Bidet P."/>
            <person name="Bingen E."/>
            <person name="Bonacorsi S."/>
            <person name="Bouchier C."/>
            <person name="Bouvet O."/>
            <person name="Calteau A."/>
            <person name="Chiapello H."/>
            <person name="Clermont O."/>
            <person name="Cruveiller S."/>
            <person name="Danchin A."/>
            <person name="Diard M."/>
            <person name="Dossat C."/>
            <person name="Karoui M.E."/>
            <person name="Frapy E."/>
            <person name="Garry L."/>
            <person name="Ghigo J.M."/>
            <person name="Gilles A.M."/>
            <person name="Johnson J."/>
            <person name="Le Bouguenec C."/>
            <person name="Lescat M."/>
            <person name="Mangenot S."/>
            <person name="Martinez-Jehanne V."/>
            <person name="Matic I."/>
            <person name="Nassif X."/>
            <person name="Oztas S."/>
            <person name="Petit M.A."/>
            <person name="Pichon C."/>
            <person name="Rouy Z."/>
            <person name="Ruf C.S."/>
            <person name="Schneider D."/>
            <person name="Tourret J."/>
            <person name="Vacherie B."/>
            <person name="Vallenet D."/>
            <person name="Medigue C."/>
            <person name="Rocha E.P.C."/>
            <person name="Denamur E."/>
        </authorList>
    </citation>
    <scope>NUCLEOTIDE SEQUENCE [LARGE SCALE GENOMIC DNA]</scope>
    <source>
        <strain>S88 / ExPEC</strain>
    </source>
</reference>
<comment type="function">
    <text evidence="1">Assembles around the rod to form the L-ring and probably protects the motor/basal body from shearing forces during rotation.</text>
</comment>
<comment type="subunit">
    <text evidence="1">The basal body constitutes a major portion of the flagellar organelle and consists of four rings (L,P,S, and M) mounted on a central rod.</text>
</comment>
<comment type="subcellular location">
    <subcellularLocation>
        <location evidence="1">Periplasm</location>
    </subcellularLocation>
    <subcellularLocation>
        <location evidence="1">Bacterial flagellum basal body</location>
    </subcellularLocation>
</comment>
<comment type="similarity">
    <text evidence="1">Belongs to the FlgI family.</text>
</comment>